<feature type="chain" id="PRO_0000230854" description="Transcriptional repressor NrdR">
    <location>
        <begin position="1"/>
        <end position="153"/>
    </location>
</feature>
<feature type="domain" description="ATP-cone" evidence="1">
    <location>
        <begin position="49"/>
        <end position="139"/>
    </location>
</feature>
<feature type="zinc finger region" evidence="1">
    <location>
        <begin position="3"/>
        <end position="34"/>
    </location>
</feature>
<name>NRDR_BACAN</name>
<sequence length="153" mass="18024">MRCPSCSHNGTRVLDSRPVDEGRSIRRRRECESCLSRFTTFERVEESPLIVVKKEGTREEFNKEKILRGLIKACEKRPVSLRQLEEVTQSVERELRNLGISEVKSDMIGEIVMEELRDIDDVAYVRFASVYRQFKDLNVFIEELKDILQKERE</sequence>
<keyword id="KW-0067">ATP-binding</keyword>
<keyword id="KW-0238">DNA-binding</keyword>
<keyword id="KW-0479">Metal-binding</keyword>
<keyword id="KW-0547">Nucleotide-binding</keyword>
<keyword id="KW-1185">Reference proteome</keyword>
<keyword id="KW-0678">Repressor</keyword>
<keyword id="KW-0804">Transcription</keyword>
<keyword id="KW-0805">Transcription regulation</keyword>
<keyword id="KW-0862">Zinc</keyword>
<keyword id="KW-0863">Zinc-finger</keyword>
<accession>Q81L10</accession>
<accession>Q6HSG5</accession>
<accession>Q6KLR0</accession>
<proteinExistence type="inferred from homology"/>
<evidence type="ECO:0000255" key="1">
    <source>
        <dbReference type="HAMAP-Rule" id="MF_00440"/>
    </source>
</evidence>
<evidence type="ECO:0000305" key="2"/>
<protein>
    <recommendedName>
        <fullName evidence="1">Transcriptional repressor NrdR</fullName>
    </recommendedName>
</protein>
<comment type="function">
    <text evidence="1">Negatively regulates transcription of bacterial ribonucleotide reductase nrd genes and operons by binding to NrdR-boxes.</text>
</comment>
<comment type="cofactor">
    <cofactor evidence="1">
        <name>Zn(2+)</name>
        <dbReference type="ChEBI" id="CHEBI:29105"/>
    </cofactor>
    <text evidence="1">Binds 1 zinc ion.</text>
</comment>
<comment type="similarity">
    <text evidence="1">Belongs to the NrdR family.</text>
</comment>
<comment type="sequence caution" evidence="2">
    <conflict type="erroneous initiation">
        <sequence resource="EMBL-CDS" id="AAT33945"/>
    </conflict>
    <text>Truncated N-terminus.</text>
</comment>
<dbReference type="EMBL" id="AE016879">
    <property type="protein sequence ID" value="AAP28513.2"/>
    <property type="molecule type" value="Genomic_DNA"/>
</dbReference>
<dbReference type="EMBL" id="AE017334">
    <property type="protein sequence ID" value="AAT33945.1"/>
    <property type="status" value="ALT_INIT"/>
    <property type="molecule type" value="Genomic_DNA"/>
</dbReference>
<dbReference type="EMBL" id="AE017225">
    <property type="protein sequence ID" value="AAT56774.1"/>
    <property type="molecule type" value="Genomic_DNA"/>
</dbReference>
<dbReference type="RefSeq" id="NP_847027.2">
    <property type="nucleotide sequence ID" value="NC_003997.3"/>
</dbReference>
<dbReference type="RefSeq" id="WP_001203687.1">
    <property type="nucleotide sequence ID" value="NZ_WXXJ01000026.1"/>
</dbReference>
<dbReference type="RefSeq" id="YP_030723.1">
    <property type="nucleotide sequence ID" value="NC_005945.1"/>
</dbReference>
<dbReference type="SMR" id="Q81L10"/>
<dbReference type="IntAct" id="Q81L10">
    <property type="interactions" value="10"/>
</dbReference>
<dbReference type="STRING" id="261594.GBAA_4824"/>
<dbReference type="GeneID" id="93006530"/>
<dbReference type="KEGG" id="ban:BA_4824"/>
<dbReference type="KEGG" id="bar:GBAA_4824"/>
<dbReference type="KEGG" id="bat:BAS4476"/>
<dbReference type="PATRIC" id="fig|198094.11.peg.4785"/>
<dbReference type="eggNOG" id="COG1327">
    <property type="taxonomic scope" value="Bacteria"/>
</dbReference>
<dbReference type="HOGENOM" id="CLU_108412_0_0_9"/>
<dbReference type="OMA" id="YRFTTYE"/>
<dbReference type="OrthoDB" id="9807461at2"/>
<dbReference type="Proteomes" id="UP000000427">
    <property type="component" value="Chromosome"/>
</dbReference>
<dbReference type="Proteomes" id="UP000000594">
    <property type="component" value="Chromosome"/>
</dbReference>
<dbReference type="GO" id="GO:0005524">
    <property type="term" value="F:ATP binding"/>
    <property type="evidence" value="ECO:0007669"/>
    <property type="project" value="UniProtKB-KW"/>
</dbReference>
<dbReference type="GO" id="GO:0003677">
    <property type="term" value="F:DNA binding"/>
    <property type="evidence" value="ECO:0007669"/>
    <property type="project" value="UniProtKB-KW"/>
</dbReference>
<dbReference type="GO" id="GO:0008270">
    <property type="term" value="F:zinc ion binding"/>
    <property type="evidence" value="ECO:0007669"/>
    <property type="project" value="UniProtKB-UniRule"/>
</dbReference>
<dbReference type="GO" id="GO:0045892">
    <property type="term" value="P:negative regulation of DNA-templated transcription"/>
    <property type="evidence" value="ECO:0007669"/>
    <property type="project" value="UniProtKB-UniRule"/>
</dbReference>
<dbReference type="HAMAP" id="MF_00440">
    <property type="entry name" value="NrdR"/>
    <property type="match status" value="1"/>
</dbReference>
<dbReference type="InterPro" id="IPR005144">
    <property type="entry name" value="ATP-cone_dom"/>
</dbReference>
<dbReference type="InterPro" id="IPR055173">
    <property type="entry name" value="NrdR-like_N"/>
</dbReference>
<dbReference type="InterPro" id="IPR003796">
    <property type="entry name" value="RNR_NrdR-like"/>
</dbReference>
<dbReference type="NCBIfam" id="TIGR00244">
    <property type="entry name" value="transcriptional regulator NrdR"/>
    <property type="match status" value="1"/>
</dbReference>
<dbReference type="PANTHER" id="PTHR30455">
    <property type="entry name" value="TRANSCRIPTIONAL REPRESSOR NRDR"/>
    <property type="match status" value="1"/>
</dbReference>
<dbReference type="PANTHER" id="PTHR30455:SF2">
    <property type="entry name" value="TRANSCRIPTIONAL REPRESSOR NRDR"/>
    <property type="match status" value="1"/>
</dbReference>
<dbReference type="Pfam" id="PF03477">
    <property type="entry name" value="ATP-cone"/>
    <property type="match status" value="1"/>
</dbReference>
<dbReference type="Pfam" id="PF22811">
    <property type="entry name" value="Zn_ribbon_NrdR"/>
    <property type="match status" value="1"/>
</dbReference>
<dbReference type="PROSITE" id="PS51161">
    <property type="entry name" value="ATP_CONE"/>
    <property type="match status" value="1"/>
</dbReference>
<organism>
    <name type="scientific">Bacillus anthracis</name>
    <dbReference type="NCBI Taxonomy" id="1392"/>
    <lineage>
        <taxon>Bacteria</taxon>
        <taxon>Bacillati</taxon>
        <taxon>Bacillota</taxon>
        <taxon>Bacilli</taxon>
        <taxon>Bacillales</taxon>
        <taxon>Bacillaceae</taxon>
        <taxon>Bacillus</taxon>
        <taxon>Bacillus cereus group</taxon>
    </lineage>
</organism>
<reference key="1">
    <citation type="journal article" date="2003" name="Nature">
        <title>The genome sequence of Bacillus anthracis Ames and comparison to closely related bacteria.</title>
        <authorList>
            <person name="Read T.D."/>
            <person name="Peterson S.N."/>
            <person name="Tourasse N.J."/>
            <person name="Baillie L.W."/>
            <person name="Paulsen I.T."/>
            <person name="Nelson K.E."/>
            <person name="Tettelin H."/>
            <person name="Fouts D.E."/>
            <person name="Eisen J.A."/>
            <person name="Gill S.R."/>
            <person name="Holtzapple E.K."/>
            <person name="Okstad O.A."/>
            <person name="Helgason E."/>
            <person name="Rilstone J."/>
            <person name="Wu M."/>
            <person name="Kolonay J.F."/>
            <person name="Beanan M.J."/>
            <person name="Dodson R.J."/>
            <person name="Brinkac L.M."/>
            <person name="Gwinn M.L."/>
            <person name="DeBoy R.T."/>
            <person name="Madpu R."/>
            <person name="Daugherty S.C."/>
            <person name="Durkin A.S."/>
            <person name="Haft D.H."/>
            <person name="Nelson W.C."/>
            <person name="Peterson J.D."/>
            <person name="Pop M."/>
            <person name="Khouri H.M."/>
            <person name="Radune D."/>
            <person name="Benton J.L."/>
            <person name="Mahamoud Y."/>
            <person name="Jiang L."/>
            <person name="Hance I.R."/>
            <person name="Weidman J.F."/>
            <person name="Berry K.J."/>
            <person name="Plaut R.D."/>
            <person name="Wolf A.M."/>
            <person name="Watkins K.L."/>
            <person name="Nierman W.C."/>
            <person name="Hazen A."/>
            <person name="Cline R.T."/>
            <person name="Redmond C."/>
            <person name="Thwaite J.E."/>
            <person name="White O."/>
            <person name="Salzberg S.L."/>
            <person name="Thomason B."/>
            <person name="Friedlander A.M."/>
            <person name="Koehler T.M."/>
            <person name="Hanna P.C."/>
            <person name="Kolstoe A.-B."/>
            <person name="Fraser C.M."/>
        </authorList>
    </citation>
    <scope>NUCLEOTIDE SEQUENCE [LARGE SCALE GENOMIC DNA]</scope>
    <source>
        <strain>Ames / isolate Porton</strain>
    </source>
</reference>
<reference key="2">
    <citation type="journal article" date="2009" name="J. Bacteriol.">
        <title>The complete genome sequence of Bacillus anthracis Ames 'Ancestor'.</title>
        <authorList>
            <person name="Ravel J."/>
            <person name="Jiang L."/>
            <person name="Stanley S.T."/>
            <person name="Wilson M.R."/>
            <person name="Decker R.S."/>
            <person name="Read T.D."/>
            <person name="Worsham P."/>
            <person name="Keim P.S."/>
            <person name="Salzberg S.L."/>
            <person name="Fraser-Liggett C.M."/>
            <person name="Rasko D.A."/>
        </authorList>
    </citation>
    <scope>NUCLEOTIDE SEQUENCE [LARGE SCALE GENOMIC DNA]</scope>
    <source>
        <strain>Ames ancestor</strain>
    </source>
</reference>
<reference key="3">
    <citation type="submission" date="2004-01" db="EMBL/GenBank/DDBJ databases">
        <title>Complete genome sequence of Bacillus anthracis Sterne.</title>
        <authorList>
            <person name="Brettin T.S."/>
            <person name="Bruce D."/>
            <person name="Challacombe J.F."/>
            <person name="Gilna P."/>
            <person name="Han C."/>
            <person name="Hill K."/>
            <person name="Hitchcock P."/>
            <person name="Jackson P."/>
            <person name="Keim P."/>
            <person name="Longmire J."/>
            <person name="Lucas S."/>
            <person name="Okinaka R."/>
            <person name="Richardson P."/>
            <person name="Rubin E."/>
            <person name="Tice H."/>
        </authorList>
    </citation>
    <scope>NUCLEOTIDE SEQUENCE [LARGE SCALE GENOMIC DNA]</scope>
    <source>
        <strain>Sterne</strain>
    </source>
</reference>
<gene>
    <name evidence="1" type="primary">nrdR</name>
    <name type="ordered locus">BA_4824</name>
    <name type="ordered locus">GBAA_4824</name>
    <name type="ordered locus">BAS4476</name>
</gene>